<feature type="chain" id="PRO_0000182446" description="Heat-inducible transcription repressor HrcA">
    <location>
        <begin position="1"/>
        <end position="342"/>
    </location>
</feature>
<accession>Q5WHG3</accession>
<evidence type="ECO:0000255" key="1">
    <source>
        <dbReference type="HAMAP-Rule" id="MF_00081"/>
    </source>
</evidence>
<keyword id="KW-1185">Reference proteome</keyword>
<keyword id="KW-0678">Repressor</keyword>
<keyword id="KW-0346">Stress response</keyword>
<keyword id="KW-0804">Transcription</keyword>
<keyword id="KW-0805">Transcription regulation</keyword>
<proteinExistence type="inferred from homology"/>
<gene>
    <name evidence="1" type="primary">hrcA</name>
    <name type="ordered locus">ABC1657</name>
</gene>
<protein>
    <recommendedName>
        <fullName evidence="1">Heat-inducible transcription repressor HrcA</fullName>
    </recommendedName>
</protein>
<reference key="1">
    <citation type="submission" date="2003-10" db="EMBL/GenBank/DDBJ databases">
        <title>The complete genome sequence of the alkaliphilic Bacillus clausii KSM-K16.</title>
        <authorList>
            <person name="Takaki Y."/>
            <person name="Kageyama Y."/>
            <person name="Shimamura S."/>
            <person name="Suzuki H."/>
            <person name="Nishi S."/>
            <person name="Hatada Y."/>
            <person name="Kawai S."/>
            <person name="Ito S."/>
            <person name="Horikoshi K."/>
        </authorList>
    </citation>
    <scope>NUCLEOTIDE SEQUENCE [LARGE SCALE GENOMIC DNA]</scope>
    <source>
        <strain>KSM-K16</strain>
    </source>
</reference>
<dbReference type="EMBL" id="AP006627">
    <property type="protein sequence ID" value="BAD64192.1"/>
    <property type="molecule type" value="Genomic_DNA"/>
</dbReference>
<dbReference type="RefSeq" id="WP_011246501.1">
    <property type="nucleotide sequence ID" value="NC_006582.1"/>
</dbReference>
<dbReference type="SMR" id="Q5WHG3"/>
<dbReference type="STRING" id="66692.ABC1657"/>
<dbReference type="KEGG" id="bcl:ABC1657"/>
<dbReference type="eggNOG" id="COG1420">
    <property type="taxonomic scope" value="Bacteria"/>
</dbReference>
<dbReference type="HOGENOM" id="CLU_050019_1_0_9"/>
<dbReference type="OrthoDB" id="9783139at2"/>
<dbReference type="Proteomes" id="UP000001168">
    <property type="component" value="Chromosome"/>
</dbReference>
<dbReference type="GO" id="GO:0003677">
    <property type="term" value="F:DNA binding"/>
    <property type="evidence" value="ECO:0007669"/>
    <property type="project" value="InterPro"/>
</dbReference>
<dbReference type="GO" id="GO:0045892">
    <property type="term" value="P:negative regulation of DNA-templated transcription"/>
    <property type="evidence" value="ECO:0007669"/>
    <property type="project" value="UniProtKB-UniRule"/>
</dbReference>
<dbReference type="FunFam" id="1.10.10.10:FF:000049">
    <property type="entry name" value="Heat-inducible transcription repressor HrcA"/>
    <property type="match status" value="1"/>
</dbReference>
<dbReference type="Gene3D" id="3.30.450.40">
    <property type="match status" value="1"/>
</dbReference>
<dbReference type="Gene3D" id="3.30.390.60">
    <property type="entry name" value="Heat-inducible transcription repressor hrca homolog, domain 3"/>
    <property type="match status" value="1"/>
</dbReference>
<dbReference type="Gene3D" id="1.10.10.10">
    <property type="entry name" value="Winged helix-like DNA-binding domain superfamily/Winged helix DNA-binding domain"/>
    <property type="match status" value="1"/>
</dbReference>
<dbReference type="HAMAP" id="MF_00081">
    <property type="entry name" value="HrcA"/>
    <property type="match status" value="1"/>
</dbReference>
<dbReference type="InterPro" id="IPR029016">
    <property type="entry name" value="GAF-like_dom_sf"/>
</dbReference>
<dbReference type="InterPro" id="IPR002571">
    <property type="entry name" value="HrcA"/>
</dbReference>
<dbReference type="InterPro" id="IPR021153">
    <property type="entry name" value="HrcA_C"/>
</dbReference>
<dbReference type="InterPro" id="IPR036388">
    <property type="entry name" value="WH-like_DNA-bd_sf"/>
</dbReference>
<dbReference type="InterPro" id="IPR036390">
    <property type="entry name" value="WH_DNA-bd_sf"/>
</dbReference>
<dbReference type="InterPro" id="IPR005104">
    <property type="entry name" value="WHTH_HrcA_DNA-bd"/>
</dbReference>
<dbReference type="InterPro" id="IPR023120">
    <property type="entry name" value="WHTH_transcript_rep_HrcA_IDD"/>
</dbReference>
<dbReference type="NCBIfam" id="TIGR00331">
    <property type="entry name" value="hrcA"/>
    <property type="match status" value="1"/>
</dbReference>
<dbReference type="PANTHER" id="PTHR34824">
    <property type="entry name" value="HEAT-INDUCIBLE TRANSCRIPTION REPRESSOR HRCA"/>
    <property type="match status" value="1"/>
</dbReference>
<dbReference type="PANTHER" id="PTHR34824:SF1">
    <property type="entry name" value="HEAT-INDUCIBLE TRANSCRIPTION REPRESSOR HRCA"/>
    <property type="match status" value="1"/>
</dbReference>
<dbReference type="Pfam" id="PF01628">
    <property type="entry name" value="HrcA"/>
    <property type="match status" value="1"/>
</dbReference>
<dbReference type="Pfam" id="PF03444">
    <property type="entry name" value="HrcA_DNA-bdg"/>
    <property type="match status" value="1"/>
</dbReference>
<dbReference type="PIRSF" id="PIRSF005485">
    <property type="entry name" value="HrcA"/>
    <property type="match status" value="1"/>
</dbReference>
<dbReference type="SUPFAM" id="SSF55781">
    <property type="entry name" value="GAF domain-like"/>
    <property type="match status" value="1"/>
</dbReference>
<dbReference type="SUPFAM" id="SSF46785">
    <property type="entry name" value="Winged helix' DNA-binding domain"/>
    <property type="match status" value="1"/>
</dbReference>
<organism>
    <name type="scientific">Shouchella clausii (strain KSM-K16)</name>
    <name type="common">Alkalihalobacillus clausii</name>
    <dbReference type="NCBI Taxonomy" id="66692"/>
    <lineage>
        <taxon>Bacteria</taxon>
        <taxon>Bacillati</taxon>
        <taxon>Bacillota</taxon>
        <taxon>Bacilli</taxon>
        <taxon>Bacillales</taxon>
        <taxon>Bacillaceae</taxon>
        <taxon>Shouchella</taxon>
    </lineage>
</organism>
<name>HRCA_SHOC1</name>
<comment type="function">
    <text evidence="1">Negative regulator of class I heat shock genes (grpE-dnaK-dnaJ and groELS operons). Prevents heat-shock induction of these operons.</text>
</comment>
<comment type="similarity">
    <text evidence="1">Belongs to the HrcA family.</text>
</comment>
<sequence length="342" mass="38848">MLTERQLLVLHAIVDDYVRSAEPVGSRSISKREDIPYSPATIRNEMADLEELGFLEKPHSSAGRVPSQQGYRYYVDHLLSPHRLTVAERAGLSRLTTARLQAMEEVFQESARILSEMTSYVSIVLGPESINERLRHIQIIPMSNQKAVVILVSENGHVENRLVQVDENVTPSDLERTVNLLNERLVGTPLSSLQRKLNTELAQLFKAHINNYEHILHMLQQSMVPASGEKLFFSGKTNLMEQPEFQDVEKMRLLYKALEEENLLQKWLRAQQTDGLHVSIGQENELEAFESCSVITASYAIDGRHVGTLGVIGPTRMEYKRMIKVVDSLSKDLTKRLTGFER</sequence>